<comment type="function">
    <text evidence="3 4 5 6 7 8 9">Plays an essential role in chain termination during de novo fatty acid synthesis. Possesses high thioesterase activity for palmitoyl-ACP versus other acyl-ACPs. Substrate preference is 16:0 &gt; 18:1 &gt; 18:0 &gt; 16:1. Plays an essential role in the supply of saturated fatty acids necessary for plant growth and seed development. Contributes to 16:0 production particularly in flowers. May be involved in the synthesis of long chain fatty acid.</text>
</comment>
<comment type="catalytic activity">
    <reaction evidence="4 9">
        <text>hexadecanoyl-[ACP] + H2O = hexadecanoate + holo-[ACP] + H(+)</text>
        <dbReference type="Rhea" id="RHEA:41932"/>
        <dbReference type="Rhea" id="RHEA-COMP:9652"/>
        <dbReference type="Rhea" id="RHEA-COMP:9685"/>
        <dbReference type="ChEBI" id="CHEBI:7896"/>
        <dbReference type="ChEBI" id="CHEBI:15377"/>
        <dbReference type="ChEBI" id="CHEBI:15378"/>
        <dbReference type="ChEBI" id="CHEBI:64479"/>
        <dbReference type="ChEBI" id="CHEBI:78483"/>
    </reaction>
</comment>
<comment type="biophysicochemical properties">
    <kinetics>
        <KM evidence="4">2.9 uM for myristoyl-ACP (14:0-ACP)</KM>
        <KM evidence="4">4 uM for myristoleoyl-ACP (14:1-ACP)</KM>
        <KM evidence="4">3.8 uM for palmitoyl-ACP (16:0-ACP)</KM>
        <KM evidence="4">2.6 uM for palmitoleoyl-ACP (16:1-ACP)</KM>
        <KM evidence="4">3 uM for stearoyl-ACP (18:0-ACP)</KM>
        <KM evidence="4">2.6 uM for oleoyl-ACP (18:1-ACP)</KM>
        <text>The catalytic efficiency for 16:0 is at least 2-fold higher than for other substrates.</text>
    </kinetics>
    <phDependence>
        <text evidence="9">Optimum pH is 9.7.</text>
    </phDependence>
</comment>
<comment type="subcellular location">
    <subcellularLocation>
        <location evidence="11">Plastid</location>
        <location evidence="11">Chloroplast</location>
    </subcellularLocation>
</comment>
<comment type="tissue specificity">
    <text evidence="3 9">Highly expressed in flowers. Expressed in roots, leaves, stems, siliques and seeds.</text>
</comment>
<comment type="disruption phenotype">
    <text evidence="5 7 8">Retarded growth, deformed seeds with low rate of germination and reduced levels of palmitate and stearate.</text>
</comment>
<comment type="miscellaneous">
    <text evidence="12">Plants silencing FATB, show reduced level of palmitate in flowers and seeds.</text>
</comment>
<comment type="similarity">
    <text evidence="11">Belongs to the acyl-ACP thioesterase family.</text>
</comment>
<name>FATB_ARATH</name>
<feature type="transit peptide" description="Chloroplast" evidence="1">
    <location>
        <begin position="1"/>
        <end position="49"/>
    </location>
</feature>
<feature type="chain" id="PRO_0000418155" description="Palmitoyl-acyl carrier protein thioesterase, chloroplastic">
    <location>
        <begin position="50"/>
        <end position="412"/>
    </location>
</feature>
<feature type="region of interest" description="Disordered" evidence="2">
    <location>
        <begin position="1"/>
        <end position="64"/>
    </location>
</feature>
<feature type="compositionally biased region" description="Polar residues" evidence="2">
    <location>
        <begin position="1"/>
        <end position="19"/>
    </location>
</feature>
<feature type="compositionally biased region" description="Polar residues" evidence="2">
    <location>
        <begin position="27"/>
        <end position="40"/>
    </location>
</feature>
<feature type="active site" evidence="1">
    <location>
        <position position="315"/>
    </location>
</feature>
<feature type="active site" evidence="1">
    <location>
        <position position="317"/>
    </location>
</feature>
<feature type="active site" evidence="1">
    <location>
        <position position="352"/>
    </location>
</feature>
<feature type="mutagenesis site" description="Loss of activity." evidence="6">
    <original>R</original>
    <variation>M</variation>
    <location>
        <position position="259"/>
    </location>
</feature>
<feature type="mutagenesis site" description="Loss of activity." evidence="6">
    <original>N</original>
    <variation>A</variation>
    <location>
        <position position="315"/>
    </location>
</feature>
<feature type="mutagenesis site" description="No effect on activity." evidence="6">
    <original>N</original>
    <variation>Y</variation>
    <location>
        <position position="320"/>
    </location>
</feature>
<feature type="sequence conflict" description="In Ref. 1; CAA85388." evidence="11" ref="1">
    <original>A</original>
    <variation>T</variation>
    <location>
        <position position="38"/>
    </location>
</feature>
<feature type="sequence conflict" description="In Ref. 1; CAA85387/CAA85388." evidence="11" ref="1">
    <original>K</original>
    <variation>R</variation>
    <location>
        <position position="60"/>
    </location>
</feature>
<sequence length="412" mass="45687">MVATSATSSFFPVPSSSLDPNGKGNKIGSTNLAGLNSAPNSGRMKVKPNAQAPPKINGKKVGLPGSVDIVRTDTETSSHPAPRTFINQLPDWSMLLAAITTIFLAAEKQWMMLDWKPRRSDMLVDPFGIGRIVQDGLVFRQNFSIRSYEIGADRSASIETVMNHLQETALNHVKTAGLLGDGFGSTPEMFKKNLIWVVTRMQVVVDKYPTWGDVVEVDTWVSQSGKNGMRRDWLVRDCNTGETLTRASSVWVMMNKLTRRLSKIPEEVRGEIEPYFVNSDPVLAEDSRKLTKIDDKTADYVRSGLTPRWSDLDVNQHVNNVKYIGWILESAPVGIMERQKLKSMTLEYRRECGRDSVLQSLTAVTGCDIGNLATAGDVECQHLLRLQDGAEVVRGRTEWSSKTPTTTWGTAP</sequence>
<proteinExistence type="evidence at protein level"/>
<evidence type="ECO:0000255" key="1"/>
<evidence type="ECO:0000256" key="2">
    <source>
        <dbReference type="SAM" id="MobiDB-lite"/>
    </source>
</evidence>
<evidence type="ECO:0000269" key="3">
    <source>
    </source>
</evidence>
<evidence type="ECO:0000269" key="4">
    <source>
    </source>
</evidence>
<evidence type="ECO:0000269" key="5">
    <source>
    </source>
</evidence>
<evidence type="ECO:0000269" key="6">
    <source>
    </source>
</evidence>
<evidence type="ECO:0000269" key="7">
    <source>
    </source>
</evidence>
<evidence type="ECO:0000269" key="8">
    <source>
    </source>
</evidence>
<evidence type="ECO:0000269" key="9">
    <source>
    </source>
</evidence>
<evidence type="ECO:0000303" key="10">
    <source>
    </source>
</evidence>
<evidence type="ECO:0000305" key="11"/>
<evidence type="ECO:0000305" key="12">
    <source>
    </source>
</evidence>
<organism>
    <name type="scientific">Arabidopsis thaliana</name>
    <name type="common">Mouse-ear cress</name>
    <dbReference type="NCBI Taxonomy" id="3702"/>
    <lineage>
        <taxon>Eukaryota</taxon>
        <taxon>Viridiplantae</taxon>
        <taxon>Streptophyta</taxon>
        <taxon>Embryophyta</taxon>
        <taxon>Tracheophyta</taxon>
        <taxon>Spermatophyta</taxon>
        <taxon>Magnoliopsida</taxon>
        <taxon>eudicotyledons</taxon>
        <taxon>Gunneridae</taxon>
        <taxon>Pentapetalae</taxon>
        <taxon>rosids</taxon>
        <taxon>malvids</taxon>
        <taxon>Brassicales</taxon>
        <taxon>Brassicaceae</taxon>
        <taxon>Camelineae</taxon>
        <taxon>Arabidopsis</taxon>
    </lineage>
</organism>
<protein>
    <recommendedName>
        <fullName>Palmitoyl-acyl carrier protein thioesterase, chloroplastic</fullName>
        <ecNumber>3.1.2.-</ecNumber>
    </recommendedName>
    <alternativeName>
        <fullName>16:0-acyl-carrier protein thioesterase</fullName>
        <shortName>16:0-ACP thioesterase</shortName>
    </alternativeName>
    <alternativeName>
        <fullName>Acyl-[acyl-carrier-protein] hydrolase</fullName>
    </alternativeName>
    <alternativeName>
        <fullName evidence="10">Acyl-acyl carrier protein thioesterase B1</fullName>
        <shortName evidence="10">AtFATB1</shortName>
    </alternativeName>
</protein>
<dbReference type="EC" id="3.1.2.-"/>
<dbReference type="EMBL" id="Z36910">
    <property type="protein sequence ID" value="CAA85387.1"/>
    <property type="molecule type" value="mRNA"/>
</dbReference>
<dbReference type="EMBL" id="Z36911">
    <property type="protein sequence ID" value="CAA85388.1"/>
    <property type="molecule type" value="mRNA"/>
</dbReference>
<dbReference type="EMBL" id="AC006932">
    <property type="protein sequence ID" value="AAF22899.1"/>
    <property type="molecule type" value="Genomic_DNA"/>
</dbReference>
<dbReference type="EMBL" id="CP002684">
    <property type="protein sequence ID" value="AEE28300.1"/>
    <property type="molecule type" value="Genomic_DNA"/>
</dbReference>
<dbReference type="EMBL" id="AY054679">
    <property type="protein sequence ID" value="AAK96870.1"/>
    <property type="molecule type" value="mRNA"/>
</dbReference>
<dbReference type="EMBL" id="AY059827">
    <property type="protein sequence ID" value="AAL24309.1"/>
    <property type="molecule type" value="mRNA"/>
</dbReference>
<dbReference type="EMBL" id="AY064652">
    <property type="protein sequence ID" value="AAL47363.1"/>
    <property type="molecule type" value="mRNA"/>
</dbReference>
<dbReference type="EMBL" id="BT008505">
    <property type="protein sequence ID" value="AAP37864.1"/>
    <property type="molecule type" value="mRNA"/>
</dbReference>
<dbReference type="PIR" id="S69195">
    <property type="entry name" value="A59034"/>
</dbReference>
<dbReference type="RefSeq" id="NP_172327.1">
    <property type="nucleotide sequence ID" value="NM_100724.3"/>
</dbReference>
<dbReference type="SMR" id="Q9SJE2"/>
<dbReference type="FunCoup" id="Q9SJE2">
    <property type="interactions" value="276"/>
</dbReference>
<dbReference type="STRING" id="3702.Q9SJE2"/>
<dbReference type="PaxDb" id="3702-AT1G08510.1"/>
<dbReference type="ProteomicsDB" id="230797"/>
<dbReference type="EnsemblPlants" id="AT1G08510.1">
    <property type="protein sequence ID" value="AT1G08510.1"/>
    <property type="gene ID" value="AT1G08510"/>
</dbReference>
<dbReference type="GeneID" id="837372"/>
<dbReference type="Gramene" id="AT1G08510.1">
    <property type="protein sequence ID" value="AT1G08510.1"/>
    <property type="gene ID" value="AT1G08510"/>
</dbReference>
<dbReference type="KEGG" id="ath:AT1G08510"/>
<dbReference type="Araport" id="AT1G08510"/>
<dbReference type="TAIR" id="AT1G08510">
    <property type="gene designation" value="FATB"/>
</dbReference>
<dbReference type="eggNOG" id="ENOG502QQHW">
    <property type="taxonomic scope" value="Eukaryota"/>
</dbReference>
<dbReference type="HOGENOM" id="CLU_045466_0_0_1"/>
<dbReference type="InParanoid" id="Q9SJE2"/>
<dbReference type="OMA" id="VECDHLL"/>
<dbReference type="OrthoDB" id="618395at2759"/>
<dbReference type="PhylomeDB" id="Q9SJE2"/>
<dbReference type="BioCyc" id="ARA:AT1G08510-MONOMER"/>
<dbReference type="BioCyc" id="MetaCyc:AT1G08510-MONOMER"/>
<dbReference type="BRENDA" id="3.1.2.14">
    <property type="organism ID" value="399"/>
</dbReference>
<dbReference type="PRO" id="PR:Q9SJE2"/>
<dbReference type="Proteomes" id="UP000006548">
    <property type="component" value="Chromosome 1"/>
</dbReference>
<dbReference type="ExpressionAtlas" id="Q9SJE2">
    <property type="expression patterns" value="baseline and differential"/>
</dbReference>
<dbReference type="GO" id="GO:0009507">
    <property type="term" value="C:chloroplast"/>
    <property type="evidence" value="ECO:0007669"/>
    <property type="project" value="UniProtKB-SubCell"/>
</dbReference>
<dbReference type="GO" id="GO:0009536">
    <property type="term" value="C:plastid"/>
    <property type="evidence" value="ECO:0000304"/>
    <property type="project" value="TAIR"/>
</dbReference>
<dbReference type="GO" id="GO:0000036">
    <property type="term" value="F:acyl carrier activity"/>
    <property type="evidence" value="ECO:0000314"/>
    <property type="project" value="TAIR"/>
</dbReference>
<dbReference type="GO" id="GO:0016297">
    <property type="term" value="F:fatty acyl-[ACP] hydrolase activity"/>
    <property type="evidence" value="ECO:0000314"/>
    <property type="project" value="TAIR"/>
</dbReference>
<dbReference type="GO" id="GO:0006633">
    <property type="term" value="P:fatty acid biosynthetic process"/>
    <property type="evidence" value="ECO:0000315"/>
    <property type="project" value="TAIR"/>
</dbReference>
<dbReference type="CDD" id="cd00586">
    <property type="entry name" value="4HBT"/>
    <property type="match status" value="1"/>
</dbReference>
<dbReference type="FunFam" id="3.10.129.10:FF:000014">
    <property type="entry name" value="Acyl-[acyl-carrier-protein] hydrolase"/>
    <property type="match status" value="1"/>
</dbReference>
<dbReference type="Gene3D" id="3.10.129.10">
    <property type="entry name" value="Hotdog Thioesterase"/>
    <property type="match status" value="1"/>
</dbReference>
<dbReference type="InterPro" id="IPR021113">
    <property type="entry name" value="Acyl-ACP-thioesterase_N"/>
</dbReference>
<dbReference type="InterPro" id="IPR049427">
    <property type="entry name" value="Acyl-ACP_TE_C"/>
</dbReference>
<dbReference type="InterPro" id="IPR002864">
    <property type="entry name" value="Acyl-ACP_thioesterase_NHD"/>
</dbReference>
<dbReference type="InterPro" id="IPR045023">
    <property type="entry name" value="FATA/B"/>
</dbReference>
<dbReference type="InterPro" id="IPR029069">
    <property type="entry name" value="HotDog_dom_sf"/>
</dbReference>
<dbReference type="PANTHER" id="PTHR31727">
    <property type="entry name" value="OLEOYL-ACYL CARRIER PROTEIN THIOESTERASE 1, CHLOROPLASTIC"/>
    <property type="match status" value="1"/>
</dbReference>
<dbReference type="PANTHER" id="PTHR31727:SF2">
    <property type="entry name" value="PALMITOYL-ACYL CARRIER PROTEIN THIOESTERASE, CHLOROPLASTIC"/>
    <property type="match status" value="1"/>
</dbReference>
<dbReference type="Pfam" id="PF01643">
    <property type="entry name" value="Acyl-ACP_TE"/>
    <property type="match status" value="1"/>
</dbReference>
<dbReference type="Pfam" id="PF20791">
    <property type="entry name" value="Acyl-ACP_TE_C"/>
    <property type="match status" value="1"/>
</dbReference>
<dbReference type="Pfam" id="PF12590">
    <property type="entry name" value="Acyl-thio_N"/>
    <property type="match status" value="1"/>
</dbReference>
<dbReference type="SUPFAM" id="SSF54637">
    <property type="entry name" value="Thioesterase/thiol ester dehydrase-isomerase"/>
    <property type="match status" value="2"/>
</dbReference>
<gene>
    <name type="primary">FATB</name>
    <name type="synonym">FATB1</name>
    <name type="ordered locus">At1g08510</name>
    <name type="ORF">T27G7.19</name>
</gene>
<reference key="1">
    <citation type="journal article" date="1995" name="Arch. Biochem. Biophys.">
        <title>Cloning and expression in Escherichia coli of a novel thioesterase from Arabidopsis thaliana specific for long-chain acyl-acyl carrier proteins.</title>
        <authorList>
            <person name="Dormann P."/>
            <person name="Voelker T.A."/>
            <person name="Ohlrogge J.B."/>
        </authorList>
    </citation>
    <scope>NUCLEOTIDE SEQUENCE [MRNA]</scope>
    <scope>FUNCTION</scope>
    <scope>CATALYTIC ACTIVITY</scope>
    <scope>BIOPHYSICOCHEMICAL PROPERTIES</scope>
    <scope>TISSUE SPECIFICITY</scope>
    <source>
        <strain>cv. Columbia</strain>
        <tissue>Root</tissue>
    </source>
</reference>
<reference key="2">
    <citation type="journal article" date="2000" name="Nature">
        <title>Sequence and analysis of chromosome 1 of the plant Arabidopsis thaliana.</title>
        <authorList>
            <person name="Theologis A."/>
            <person name="Ecker J.R."/>
            <person name="Palm C.J."/>
            <person name="Federspiel N.A."/>
            <person name="Kaul S."/>
            <person name="White O."/>
            <person name="Alonso J."/>
            <person name="Altafi H."/>
            <person name="Araujo R."/>
            <person name="Bowman C.L."/>
            <person name="Brooks S.Y."/>
            <person name="Buehler E."/>
            <person name="Chan A."/>
            <person name="Chao Q."/>
            <person name="Chen H."/>
            <person name="Cheuk R.F."/>
            <person name="Chin C.W."/>
            <person name="Chung M.K."/>
            <person name="Conn L."/>
            <person name="Conway A.B."/>
            <person name="Conway A.R."/>
            <person name="Creasy T.H."/>
            <person name="Dewar K."/>
            <person name="Dunn P."/>
            <person name="Etgu P."/>
            <person name="Feldblyum T.V."/>
            <person name="Feng J.-D."/>
            <person name="Fong B."/>
            <person name="Fujii C.Y."/>
            <person name="Gill J.E."/>
            <person name="Goldsmith A.D."/>
            <person name="Haas B."/>
            <person name="Hansen N.F."/>
            <person name="Hughes B."/>
            <person name="Huizar L."/>
            <person name="Hunter J.L."/>
            <person name="Jenkins J."/>
            <person name="Johnson-Hopson C."/>
            <person name="Khan S."/>
            <person name="Khaykin E."/>
            <person name="Kim C.J."/>
            <person name="Koo H.L."/>
            <person name="Kremenetskaia I."/>
            <person name="Kurtz D.B."/>
            <person name="Kwan A."/>
            <person name="Lam B."/>
            <person name="Langin-Hooper S."/>
            <person name="Lee A."/>
            <person name="Lee J.M."/>
            <person name="Lenz C.A."/>
            <person name="Li J.H."/>
            <person name="Li Y.-P."/>
            <person name="Lin X."/>
            <person name="Liu S.X."/>
            <person name="Liu Z.A."/>
            <person name="Luros J.S."/>
            <person name="Maiti R."/>
            <person name="Marziali A."/>
            <person name="Militscher J."/>
            <person name="Miranda M."/>
            <person name="Nguyen M."/>
            <person name="Nierman W.C."/>
            <person name="Osborne B.I."/>
            <person name="Pai G."/>
            <person name="Peterson J."/>
            <person name="Pham P.K."/>
            <person name="Rizzo M."/>
            <person name="Rooney T."/>
            <person name="Rowley D."/>
            <person name="Sakano H."/>
            <person name="Salzberg S.L."/>
            <person name="Schwartz J.R."/>
            <person name="Shinn P."/>
            <person name="Southwick A.M."/>
            <person name="Sun H."/>
            <person name="Tallon L.J."/>
            <person name="Tambunga G."/>
            <person name="Toriumi M.J."/>
            <person name="Town C.D."/>
            <person name="Utterback T."/>
            <person name="Van Aken S."/>
            <person name="Vaysberg M."/>
            <person name="Vysotskaia V.S."/>
            <person name="Walker M."/>
            <person name="Wu D."/>
            <person name="Yu G."/>
            <person name="Fraser C.M."/>
            <person name="Venter J.C."/>
            <person name="Davis R.W."/>
        </authorList>
    </citation>
    <scope>NUCLEOTIDE SEQUENCE [LARGE SCALE GENOMIC DNA]</scope>
    <source>
        <strain>cv. Columbia</strain>
    </source>
</reference>
<reference key="3">
    <citation type="journal article" date="2017" name="Plant J.">
        <title>Araport11: a complete reannotation of the Arabidopsis thaliana reference genome.</title>
        <authorList>
            <person name="Cheng C.Y."/>
            <person name="Krishnakumar V."/>
            <person name="Chan A.P."/>
            <person name="Thibaud-Nissen F."/>
            <person name="Schobel S."/>
            <person name="Town C.D."/>
        </authorList>
    </citation>
    <scope>GENOME REANNOTATION</scope>
    <source>
        <strain>cv. Columbia</strain>
    </source>
</reference>
<reference key="4">
    <citation type="journal article" date="2003" name="Science">
        <title>Empirical analysis of transcriptional activity in the Arabidopsis genome.</title>
        <authorList>
            <person name="Yamada K."/>
            <person name="Lim J."/>
            <person name="Dale J.M."/>
            <person name="Chen H."/>
            <person name="Shinn P."/>
            <person name="Palm C.J."/>
            <person name="Southwick A.M."/>
            <person name="Wu H.C."/>
            <person name="Kim C.J."/>
            <person name="Nguyen M."/>
            <person name="Pham P.K."/>
            <person name="Cheuk R.F."/>
            <person name="Karlin-Newmann G."/>
            <person name="Liu S.X."/>
            <person name="Lam B."/>
            <person name="Sakano H."/>
            <person name="Wu T."/>
            <person name="Yu G."/>
            <person name="Miranda M."/>
            <person name="Quach H.L."/>
            <person name="Tripp M."/>
            <person name="Chang C.H."/>
            <person name="Lee J.M."/>
            <person name="Toriumi M.J."/>
            <person name="Chan M.M."/>
            <person name="Tang C.C."/>
            <person name="Onodera C.S."/>
            <person name="Deng J.M."/>
            <person name="Akiyama K."/>
            <person name="Ansari Y."/>
            <person name="Arakawa T."/>
            <person name="Banh J."/>
            <person name="Banno F."/>
            <person name="Bowser L."/>
            <person name="Brooks S.Y."/>
            <person name="Carninci P."/>
            <person name="Chao Q."/>
            <person name="Choy N."/>
            <person name="Enju A."/>
            <person name="Goldsmith A.D."/>
            <person name="Gurjal M."/>
            <person name="Hansen N.F."/>
            <person name="Hayashizaki Y."/>
            <person name="Johnson-Hopson C."/>
            <person name="Hsuan V.W."/>
            <person name="Iida K."/>
            <person name="Karnes M."/>
            <person name="Khan S."/>
            <person name="Koesema E."/>
            <person name="Ishida J."/>
            <person name="Jiang P.X."/>
            <person name="Jones T."/>
            <person name="Kawai J."/>
            <person name="Kamiya A."/>
            <person name="Meyers C."/>
            <person name="Nakajima M."/>
            <person name="Narusaka M."/>
            <person name="Seki M."/>
            <person name="Sakurai T."/>
            <person name="Satou M."/>
            <person name="Tamse R."/>
            <person name="Vaysberg M."/>
            <person name="Wallender E.K."/>
            <person name="Wong C."/>
            <person name="Yamamura Y."/>
            <person name="Yuan S."/>
            <person name="Shinozaki K."/>
            <person name="Davis R.W."/>
            <person name="Theologis A."/>
            <person name="Ecker J.R."/>
        </authorList>
    </citation>
    <scope>NUCLEOTIDE SEQUENCE [LARGE SCALE MRNA]</scope>
    <source>
        <strain>cv. Columbia</strain>
    </source>
</reference>
<reference key="5">
    <citation type="journal article" date="2000" name="Plant Physiol.">
        <title>Accumulation of palmitate in Arabidopsis mediated by the acyl-acyl carrier protein thioesterase FATB1.</title>
        <authorList>
            <person name="Doermann P."/>
            <person name="Voelker T.A."/>
            <person name="Ohlrogge J.B."/>
        </authorList>
    </citation>
    <scope>FUNCTION</scope>
    <scope>TISSUE SPECIFICITY</scope>
    <source>
        <strain>cv. Col-2</strain>
    </source>
</reference>
<reference key="6">
    <citation type="journal article" date="2002" name="Arch. Biochem. Biophys.">
        <title>Characterization of substrate specificity of plant FatA and FatB acyl-ACP thioesterases.</title>
        <authorList>
            <person name="Salas J.J."/>
            <person name="Ohlrogge J.B."/>
        </authorList>
    </citation>
    <scope>FUNCTION</scope>
    <scope>CATALYTIC ACTIVITY</scope>
    <scope>BIOPHYSICOCHEMICAL PROPERTIES</scope>
    <source>
        <strain>cv. Columbia</strain>
    </source>
</reference>
<reference key="7">
    <citation type="journal article" date="2003" name="Plant Cell">
        <title>Disruption of the FATB gene in Arabidopsis demonstrates an essential role of saturated fatty acids in plant growth.</title>
        <authorList>
            <person name="Bonaventure G."/>
            <person name="Salas J.J."/>
            <person name="Pollard M.R."/>
            <person name="Ohlrogge J.B."/>
        </authorList>
    </citation>
    <scope>FUNCTION</scope>
    <scope>DISRUPTION PHENOTYPE</scope>
    <source>
        <strain>cv. Wassilewskija</strain>
    </source>
</reference>
<reference key="8">
    <citation type="journal article" date="2005" name="J. Biol. Chem.">
        <title>A structural model of the plant acyl-acyl carrier protein thioesterase FatB comprises two helix/4-stranded sheet domains, the N-terminal domain containing residues that affect specificity and the C-terminal domain containing catalytic residues.</title>
        <authorList>
            <person name="Mayer K.M."/>
            <person name="Shanklin J."/>
        </authorList>
    </citation>
    <scope>FUNCTION</scope>
    <scope>3D-STRUCTURE MODELING</scope>
    <scope>MUTAGENESIS OF ARG-259; ASN-315 AND ASN-320</scope>
    <source>
        <strain>cv. Columbia</strain>
    </source>
</reference>
<reference key="9">
    <citation type="journal article" date="2008" name="Plant Cell">
        <title>A MYB transcription factor regulates very-long-chain fatty acid biosynthesis for activation of the hypersensitive cell death response in Arabidopsis.</title>
        <authorList>
            <person name="Raffaele S."/>
            <person name="Vailleau F."/>
            <person name="Leger A."/>
            <person name="Joubes J."/>
            <person name="Miersch O."/>
            <person name="Huard C."/>
            <person name="Blee E."/>
            <person name="Mongrand S."/>
            <person name="Domergue F."/>
            <person name="Roby D."/>
        </authorList>
    </citation>
    <scope>FUNCTION</scope>
    <scope>DISRUPTION PHENOTYPE</scope>
    <source>
        <strain>cv. Wassilewskija</strain>
    </source>
</reference>
<reference key="10">
    <citation type="journal article" date="2008" name="Plant Physiol.">
        <title>New connections across pathways and cellular processes: industrialized mutant screening reveals novel associations between diverse phenotypes in Arabidopsis.</title>
        <authorList>
            <person name="Lu Y."/>
            <person name="Savage L.J."/>
            <person name="Ajjawi I."/>
            <person name="Imre K.M."/>
            <person name="Yoder D.W."/>
            <person name="Benning C."/>
            <person name="Dellapenna D."/>
            <person name="Ohlrogge J.B."/>
            <person name="Osteryoung K.W."/>
            <person name="Weber A.P."/>
            <person name="Wilkerson C.G."/>
            <person name="Last R.L."/>
        </authorList>
    </citation>
    <scope>FUNCTION</scope>
    <scope>DISRUPTION PHENOTYPE</scope>
    <source>
        <strain>cv. Wassilewskija</strain>
    </source>
</reference>
<accession>Q9SJE2</accession>
<accession>Q42558</accession>
<accession>Q42562</accession>
<keyword id="KW-0150">Chloroplast</keyword>
<keyword id="KW-0275">Fatty acid biosynthesis</keyword>
<keyword id="KW-0276">Fatty acid metabolism</keyword>
<keyword id="KW-0378">Hydrolase</keyword>
<keyword id="KW-0444">Lipid biosynthesis</keyword>
<keyword id="KW-0443">Lipid metabolism</keyword>
<keyword id="KW-0934">Plastid</keyword>
<keyword id="KW-1185">Reference proteome</keyword>
<keyword id="KW-0809">Transit peptide</keyword>